<keyword id="KW-0002">3D-structure</keyword>
<keyword id="KW-0067">ATP-binding</keyword>
<keyword id="KW-0112">Calmodulin-binding</keyword>
<keyword id="KW-0966">Cell projection</keyword>
<keyword id="KW-0903">Direct protein sequencing</keyword>
<keyword id="KW-0418">Kinase</keyword>
<keyword id="KW-0449">Lipoprotein</keyword>
<keyword id="KW-0460">Magnesium</keyword>
<keyword id="KW-0479">Metal-binding</keyword>
<keyword id="KW-0547">Nucleotide-binding</keyword>
<keyword id="KW-0564">Palmitate</keyword>
<keyword id="KW-0597">Phosphoprotein</keyword>
<keyword id="KW-1185">Reference proteome</keyword>
<keyword id="KW-0723">Serine/threonine-protein kinase</keyword>
<keyword id="KW-0770">Synapse</keyword>
<keyword id="KW-0808">Transferase</keyword>
<protein>
    <recommendedName>
        <fullName>Calcium/calmodulin-dependent protein kinase type II subunit alpha</fullName>
        <shortName>CaM kinase II subunit alpha</shortName>
        <shortName>CaMK-II subunit alpha</shortName>
        <ecNumber evidence="6">2.7.11.17</ecNumber>
    </recommendedName>
</protein>
<organism>
    <name type="scientific">Rattus norvegicus</name>
    <name type="common">Rat</name>
    <dbReference type="NCBI Taxonomy" id="10116"/>
    <lineage>
        <taxon>Eukaryota</taxon>
        <taxon>Metazoa</taxon>
        <taxon>Chordata</taxon>
        <taxon>Craniata</taxon>
        <taxon>Vertebrata</taxon>
        <taxon>Euteleostomi</taxon>
        <taxon>Mammalia</taxon>
        <taxon>Eutheria</taxon>
        <taxon>Euarchontoglires</taxon>
        <taxon>Glires</taxon>
        <taxon>Rodentia</taxon>
        <taxon>Myomorpha</taxon>
        <taxon>Muroidea</taxon>
        <taxon>Muridae</taxon>
        <taxon>Murinae</taxon>
        <taxon>Rattus</taxon>
    </lineage>
</organism>
<name>KCC2A_RAT</name>
<proteinExistence type="evidence at protein level"/>
<gene>
    <name type="primary">Camk2a</name>
</gene>
<accession>P11275</accession>
<dbReference type="EC" id="2.7.11.17" evidence="6"/>
<dbReference type="EMBL" id="J02942">
    <property type="protein sequence ID" value="AAA41870.1"/>
    <property type="molecule type" value="mRNA"/>
</dbReference>
<dbReference type="EMBL" id="M16960">
    <property type="protein sequence ID" value="AAA41855.1"/>
    <property type="molecule type" value="mRNA"/>
</dbReference>
<dbReference type="EMBL" id="M29699">
    <property type="protein sequence ID" value="AAA40841.1"/>
    <property type="molecule type" value="Genomic_DNA"/>
</dbReference>
<dbReference type="PIR" id="A30355">
    <property type="entry name" value="A30355"/>
</dbReference>
<dbReference type="RefSeq" id="NP_037052.1">
    <property type="nucleotide sequence ID" value="NM_012920.1"/>
</dbReference>
<dbReference type="PDB" id="1CDM">
    <property type="method" value="X-ray"/>
    <property type="resolution" value="2.00 A"/>
    <property type="chains" value="B=290-314"/>
</dbReference>
<dbReference type="PDB" id="1CM1">
    <property type="method" value="X-ray"/>
    <property type="resolution" value="2.00 A"/>
    <property type="chains" value="B=290-314"/>
</dbReference>
<dbReference type="PDB" id="1CM4">
    <property type="method" value="X-ray"/>
    <property type="resolution" value="2.00 A"/>
    <property type="chains" value="B=290-314"/>
</dbReference>
<dbReference type="PDB" id="5U6Y">
    <property type="method" value="EM"/>
    <property type="resolution" value="20.00 A"/>
    <property type="chains" value="A/B/C/D/E/F/G/H/I/J/K/L=13-472"/>
</dbReference>
<dbReference type="PDB" id="8SYG">
    <property type="method" value="EM"/>
    <property type="resolution" value="2.60 A"/>
    <property type="chains" value="A/B/C/D/E/F/G/H/I/J/K/L/M/N=345-478"/>
</dbReference>
<dbReference type="PDB" id="8T15">
    <property type="method" value="EM"/>
    <property type="resolution" value="2.70 A"/>
    <property type="chains" value="A/B/C/D/E/F/G/H/I/J/K/L=345-478"/>
</dbReference>
<dbReference type="PDBsum" id="1CDM"/>
<dbReference type="PDBsum" id="1CM1"/>
<dbReference type="PDBsum" id="1CM4"/>
<dbReference type="PDBsum" id="5U6Y"/>
<dbReference type="PDBsum" id="8SYG"/>
<dbReference type="PDBsum" id="8T15"/>
<dbReference type="EMDB" id="EMD-40873"/>
<dbReference type="EMDB" id="EMD-40955"/>
<dbReference type="EMDB" id="EMD-8514"/>
<dbReference type="SMR" id="P11275"/>
<dbReference type="BioGRID" id="247435">
    <property type="interactions" value="124"/>
</dbReference>
<dbReference type="CORUM" id="P11275"/>
<dbReference type="DIP" id="DIP-29639N"/>
<dbReference type="FunCoup" id="P11275">
    <property type="interactions" value="2230"/>
</dbReference>
<dbReference type="IntAct" id="P11275">
    <property type="interactions" value="21"/>
</dbReference>
<dbReference type="MINT" id="P11275"/>
<dbReference type="STRING" id="10116.ENSRNOP00000041940"/>
<dbReference type="BindingDB" id="P11275"/>
<dbReference type="ChEMBL" id="CHEMBL2359"/>
<dbReference type="GuidetoPHARMACOLOGY" id="1555"/>
<dbReference type="CarbonylDB" id="P11275"/>
<dbReference type="GlyGen" id="P11275">
    <property type="glycosylation" value="2 sites, 1 O-linked glycan (1 site)"/>
</dbReference>
<dbReference type="iPTMnet" id="P11275"/>
<dbReference type="PhosphoSitePlus" id="P11275"/>
<dbReference type="SwissPalm" id="P11275"/>
<dbReference type="jPOST" id="P11275"/>
<dbReference type="PaxDb" id="10116-ENSRNOP00000041940"/>
<dbReference type="GeneID" id="25400"/>
<dbReference type="KEGG" id="rno:25400"/>
<dbReference type="UCSC" id="RGD:2261">
    <property type="organism name" value="rat"/>
</dbReference>
<dbReference type="AGR" id="RGD:2261"/>
<dbReference type="CTD" id="815"/>
<dbReference type="RGD" id="2261">
    <property type="gene designation" value="Camk2a"/>
</dbReference>
<dbReference type="eggNOG" id="KOG0033">
    <property type="taxonomic scope" value="Eukaryota"/>
</dbReference>
<dbReference type="InParanoid" id="P11275"/>
<dbReference type="PhylomeDB" id="P11275"/>
<dbReference type="BRENDA" id="2.7.11.17">
    <property type="organism ID" value="5301"/>
</dbReference>
<dbReference type="Reactome" id="R-RNO-3371571">
    <property type="pathway name" value="HSF1-dependent transactivation"/>
</dbReference>
<dbReference type="Reactome" id="R-RNO-399719">
    <property type="pathway name" value="Trafficking of AMPA receptors"/>
</dbReference>
<dbReference type="Reactome" id="R-RNO-4086398">
    <property type="pathway name" value="Ca2+ pathway"/>
</dbReference>
<dbReference type="Reactome" id="R-RNO-438066">
    <property type="pathway name" value="Unblocking of NMDA receptors, glutamate binding and activation"/>
</dbReference>
<dbReference type="Reactome" id="R-RNO-5578775">
    <property type="pathway name" value="Ion homeostasis"/>
</dbReference>
<dbReference type="Reactome" id="R-RNO-5673000">
    <property type="pathway name" value="RAF activation"/>
</dbReference>
<dbReference type="Reactome" id="R-RNO-5673001">
    <property type="pathway name" value="RAF/MAP kinase cascade"/>
</dbReference>
<dbReference type="Reactome" id="R-RNO-877300">
    <property type="pathway name" value="Interferon gamma signaling"/>
</dbReference>
<dbReference type="Reactome" id="R-RNO-936837">
    <property type="pathway name" value="Ion transport by P-type ATPases"/>
</dbReference>
<dbReference type="CD-CODE" id="A7E9CBB4">
    <property type="entry name" value="Postsynaptic density"/>
</dbReference>
<dbReference type="EvolutionaryTrace" id="P11275"/>
<dbReference type="PRO" id="PR:P11275"/>
<dbReference type="Proteomes" id="UP000002494">
    <property type="component" value="Unplaced"/>
</dbReference>
<dbReference type="GO" id="GO:0030424">
    <property type="term" value="C:axon"/>
    <property type="evidence" value="ECO:0000314"/>
    <property type="project" value="RGD"/>
</dbReference>
<dbReference type="GO" id="GO:0005954">
    <property type="term" value="C:calcium- and calmodulin-dependent protein kinase complex"/>
    <property type="evidence" value="ECO:0000250"/>
    <property type="project" value="UniProtKB"/>
</dbReference>
<dbReference type="GO" id="GO:0005737">
    <property type="term" value="C:cytoplasm"/>
    <property type="evidence" value="ECO:0000318"/>
    <property type="project" value="GO_Central"/>
</dbReference>
<dbReference type="GO" id="GO:0005829">
    <property type="term" value="C:cytosol"/>
    <property type="evidence" value="ECO:0000304"/>
    <property type="project" value="Reactome"/>
</dbReference>
<dbReference type="GO" id="GO:0030425">
    <property type="term" value="C:dendrite"/>
    <property type="evidence" value="ECO:0000314"/>
    <property type="project" value="UniProtKB"/>
</dbReference>
<dbReference type="GO" id="GO:0032839">
    <property type="term" value="C:dendrite cytoplasm"/>
    <property type="evidence" value="ECO:0000314"/>
    <property type="project" value="BHF-UCL"/>
</dbReference>
<dbReference type="GO" id="GO:0043197">
    <property type="term" value="C:dendritic spine"/>
    <property type="evidence" value="ECO:0000250"/>
    <property type="project" value="UniProtKB"/>
</dbReference>
<dbReference type="GO" id="GO:0098978">
    <property type="term" value="C:glutamatergic synapse"/>
    <property type="evidence" value="ECO:0000314"/>
    <property type="project" value="SynGO"/>
</dbReference>
<dbReference type="GO" id="GO:0005739">
    <property type="term" value="C:mitochondrion"/>
    <property type="evidence" value="ECO:0000250"/>
    <property type="project" value="ParkinsonsUK-UCL"/>
</dbReference>
<dbReference type="GO" id="GO:0043005">
    <property type="term" value="C:neuron projection"/>
    <property type="evidence" value="ECO:0000318"/>
    <property type="project" value="GO_Central"/>
</dbReference>
<dbReference type="GO" id="GO:0043025">
    <property type="term" value="C:neuronal cell body"/>
    <property type="evidence" value="ECO:0000314"/>
    <property type="project" value="RGD"/>
</dbReference>
<dbReference type="GO" id="GO:0099524">
    <property type="term" value="C:postsynaptic cytosol"/>
    <property type="evidence" value="ECO:0000314"/>
    <property type="project" value="SynGO"/>
</dbReference>
<dbReference type="GO" id="GO:0014069">
    <property type="term" value="C:postsynaptic density"/>
    <property type="evidence" value="ECO:0000314"/>
    <property type="project" value="SynGO"/>
</dbReference>
<dbReference type="GO" id="GO:0099523">
    <property type="term" value="C:presynaptic cytosol"/>
    <property type="evidence" value="ECO:0000314"/>
    <property type="project" value="SynGO"/>
</dbReference>
<dbReference type="GO" id="GO:0098685">
    <property type="term" value="C:Schaffer collateral - CA1 synapse"/>
    <property type="evidence" value="ECO:0000266"/>
    <property type="project" value="RGD"/>
</dbReference>
<dbReference type="GO" id="GO:0045202">
    <property type="term" value="C:synapse"/>
    <property type="evidence" value="ECO:0000266"/>
    <property type="project" value="RGD"/>
</dbReference>
<dbReference type="GO" id="GO:0005524">
    <property type="term" value="F:ATP binding"/>
    <property type="evidence" value="ECO:0007669"/>
    <property type="project" value="UniProtKB-KW"/>
</dbReference>
<dbReference type="GO" id="GO:0004683">
    <property type="term" value="F:calcium/calmodulin-dependent protein kinase activity"/>
    <property type="evidence" value="ECO:0000314"/>
    <property type="project" value="UniProtKB"/>
</dbReference>
<dbReference type="GO" id="GO:0005516">
    <property type="term" value="F:calmodulin binding"/>
    <property type="evidence" value="ECO:0000266"/>
    <property type="project" value="RGD"/>
</dbReference>
<dbReference type="GO" id="GO:0035254">
    <property type="term" value="F:glutamate receptor binding"/>
    <property type="evidence" value="ECO:0000250"/>
    <property type="project" value="ParkinsonsUK-UCL"/>
</dbReference>
<dbReference type="GO" id="GO:0032794">
    <property type="term" value="F:GTPase activating protein binding"/>
    <property type="evidence" value="ECO:0000353"/>
    <property type="project" value="RGD"/>
</dbReference>
<dbReference type="GO" id="GO:0042802">
    <property type="term" value="F:identical protein binding"/>
    <property type="evidence" value="ECO:0000266"/>
    <property type="project" value="RGD"/>
</dbReference>
<dbReference type="GO" id="GO:0016301">
    <property type="term" value="F:kinase activity"/>
    <property type="evidence" value="ECO:0000266"/>
    <property type="project" value="RGD"/>
</dbReference>
<dbReference type="GO" id="GO:0046872">
    <property type="term" value="F:metal ion binding"/>
    <property type="evidence" value="ECO:0007669"/>
    <property type="project" value="UniProtKB-KW"/>
</dbReference>
<dbReference type="GO" id="GO:0042803">
    <property type="term" value="F:protein homodimerization activity"/>
    <property type="evidence" value="ECO:0000266"/>
    <property type="project" value="RGD"/>
</dbReference>
<dbReference type="GO" id="GO:0106310">
    <property type="term" value="F:protein serine kinase activity"/>
    <property type="evidence" value="ECO:0007669"/>
    <property type="project" value="RHEA"/>
</dbReference>
<dbReference type="GO" id="GO:0004674">
    <property type="term" value="F:protein serine/threonine kinase activity"/>
    <property type="evidence" value="ECO:0000250"/>
    <property type="project" value="ParkinsonsUK-UCL"/>
</dbReference>
<dbReference type="GO" id="GO:0038166">
    <property type="term" value="P:angiotensin-activated signaling pathway"/>
    <property type="evidence" value="ECO:0000266"/>
    <property type="project" value="RGD"/>
</dbReference>
<dbReference type="GO" id="GO:0006816">
    <property type="term" value="P:calcium ion transport"/>
    <property type="evidence" value="ECO:0000250"/>
    <property type="project" value="ParkinsonsUK-UCL"/>
</dbReference>
<dbReference type="GO" id="GO:0035458">
    <property type="term" value="P:cellular response to interferon-beta"/>
    <property type="evidence" value="ECO:0000250"/>
    <property type="project" value="UniProtKB"/>
</dbReference>
<dbReference type="GO" id="GO:0071346">
    <property type="term" value="P:cellular response to type II interferon"/>
    <property type="evidence" value="ECO:0000266"/>
    <property type="project" value="RGD"/>
</dbReference>
<dbReference type="GO" id="GO:0048813">
    <property type="term" value="P:dendrite morphogenesis"/>
    <property type="evidence" value="ECO:0000266"/>
    <property type="project" value="RGD"/>
</dbReference>
<dbReference type="GO" id="GO:0060996">
    <property type="term" value="P:dendritic spine development"/>
    <property type="evidence" value="ECO:0000250"/>
    <property type="project" value="UniProtKB"/>
</dbReference>
<dbReference type="GO" id="GO:0000082">
    <property type="term" value="P:G1/S transition of mitotic cell cycle"/>
    <property type="evidence" value="ECO:0000250"/>
    <property type="project" value="ParkinsonsUK-UCL"/>
</dbReference>
<dbReference type="GO" id="GO:0035235">
    <property type="term" value="P:ionotropic glutamate receptor signaling pathway"/>
    <property type="evidence" value="ECO:0000314"/>
    <property type="project" value="UniProtKB"/>
</dbReference>
<dbReference type="GO" id="GO:0051346">
    <property type="term" value="P:negative regulation of hydrolase activity"/>
    <property type="evidence" value="ECO:0000250"/>
    <property type="project" value="UniProtKB"/>
</dbReference>
<dbReference type="GO" id="GO:0098877">
    <property type="term" value="P:neurotransmitter receptor transport to plasma membrane"/>
    <property type="evidence" value="ECO:0000315"/>
    <property type="project" value="RGD"/>
</dbReference>
<dbReference type="GO" id="GO:1990443">
    <property type="term" value="P:peptidyl-threonine autophosphorylation"/>
    <property type="evidence" value="ECO:0000250"/>
    <property type="project" value="UniProtKB"/>
</dbReference>
<dbReference type="GO" id="GO:0051928">
    <property type="term" value="P:positive regulation of calcium ion transport"/>
    <property type="evidence" value="ECO:0000250"/>
    <property type="project" value="ParkinsonsUK-UCL"/>
</dbReference>
<dbReference type="GO" id="GO:0010666">
    <property type="term" value="P:positive regulation of cardiac muscle cell apoptotic process"/>
    <property type="evidence" value="ECO:0000250"/>
    <property type="project" value="ParkinsonsUK-UCL"/>
</dbReference>
<dbReference type="GO" id="GO:0046427">
    <property type="term" value="P:positive regulation of receptor signaling pathway via JAK-STAT"/>
    <property type="evidence" value="ECO:0000250"/>
    <property type="project" value="UniProtKB"/>
</dbReference>
<dbReference type="GO" id="GO:2000124">
    <property type="term" value="P:regulation of endocannabinoid signaling pathway"/>
    <property type="evidence" value="ECO:0000250"/>
    <property type="project" value="UniProtKB"/>
</dbReference>
<dbReference type="GO" id="GO:1902108">
    <property type="term" value="P:regulation of mitochondrial membrane permeability involved in apoptotic process"/>
    <property type="evidence" value="ECO:0000250"/>
    <property type="project" value="ParkinsonsUK-UCL"/>
</dbReference>
<dbReference type="GO" id="GO:2001222">
    <property type="term" value="P:regulation of neuron migration"/>
    <property type="evidence" value="ECO:0000250"/>
    <property type="project" value="UniProtKB"/>
</dbReference>
<dbReference type="GO" id="GO:0048168">
    <property type="term" value="P:regulation of neuronal synaptic plasticity"/>
    <property type="evidence" value="ECO:0000250"/>
    <property type="project" value="ParkinsonsUK-UCL"/>
</dbReference>
<dbReference type="GO" id="GO:0098696">
    <property type="term" value="P:regulation of neurotransmitter receptor localization to postsynaptic specialization membrane"/>
    <property type="evidence" value="ECO:0000314"/>
    <property type="project" value="SynGO"/>
</dbReference>
<dbReference type="GO" id="GO:0046928">
    <property type="term" value="P:regulation of neurotransmitter secretion"/>
    <property type="evidence" value="ECO:0000250"/>
    <property type="project" value="ParkinsonsUK-UCL"/>
</dbReference>
<dbReference type="GO" id="GO:1903076">
    <property type="term" value="P:regulation of protein localization to plasma membrane"/>
    <property type="evidence" value="ECO:0000316"/>
    <property type="project" value="ARUK-UCL"/>
</dbReference>
<dbReference type="GO" id="GO:0099148">
    <property type="term" value="P:regulation of synaptic vesicle docking"/>
    <property type="evidence" value="ECO:0000266"/>
    <property type="project" value="RGD"/>
</dbReference>
<dbReference type="GO" id="GO:0002931">
    <property type="term" value="P:response to ischemia"/>
    <property type="evidence" value="ECO:0000250"/>
    <property type="project" value="ParkinsonsUK-UCL"/>
</dbReference>
<dbReference type="CDD" id="cd14086">
    <property type="entry name" value="STKc_CaMKII"/>
    <property type="match status" value="1"/>
</dbReference>
<dbReference type="FunFam" id="1.10.510.10:FF:000001">
    <property type="entry name" value="Calcium/calmodulin-dependent protein kinase type II subunit delta"/>
    <property type="match status" value="1"/>
</dbReference>
<dbReference type="FunFam" id="3.30.200.20:FF:000002">
    <property type="entry name" value="Calcium/calmodulin-dependent protein kinase type II subunit delta isoform 2"/>
    <property type="match status" value="1"/>
</dbReference>
<dbReference type="FunFam" id="3.10.450.50:FF:000001">
    <property type="entry name" value="calcium/calmodulin-dependent protein kinase type II subunit gamma isoform X1"/>
    <property type="match status" value="1"/>
</dbReference>
<dbReference type="Gene3D" id="3.10.450.50">
    <property type="match status" value="1"/>
</dbReference>
<dbReference type="Gene3D" id="6.10.140.620">
    <property type="match status" value="1"/>
</dbReference>
<dbReference type="Gene3D" id="3.30.200.20">
    <property type="entry name" value="Phosphorylase Kinase, domain 1"/>
    <property type="match status" value="1"/>
</dbReference>
<dbReference type="Gene3D" id="1.10.510.10">
    <property type="entry name" value="Transferase(Phosphotransferase) domain 1"/>
    <property type="match status" value="1"/>
</dbReference>
<dbReference type="InterPro" id="IPR013543">
    <property type="entry name" value="Ca/CaM-dep_prot_kinase-assoc"/>
</dbReference>
<dbReference type="InterPro" id="IPR011009">
    <property type="entry name" value="Kinase-like_dom_sf"/>
</dbReference>
<dbReference type="InterPro" id="IPR032710">
    <property type="entry name" value="NTF2-like_dom_sf"/>
</dbReference>
<dbReference type="InterPro" id="IPR000719">
    <property type="entry name" value="Prot_kinase_dom"/>
</dbReference>
<dbReference type="InterPro" id="IPR017441">
    <property type="entry name" value="Protein_kinase_ATP_BS"/>
</dbReference>
<dbReference type="InterPro" id="IPR008271">
    <property type="entry name" value="Ser/Thr_kinase_AS"/>
</dbReference>
<dbReference type="PANTHER" id="PTHR24347">
    <property type="entry name" value="SERINE/THREONINE-PROTEIN KINASE"/>
    <property type="match status" value="1"/>
</dbReference>
<dbReference type="Pfam" id="PF08332">
    <property type="entry name" value="CaMKII_AD"/>
    <property type="match status" value="1"/>
</dbReference>
<dbReference type="Pfam" id="PF00069">
    <property type="entry name" value="Pkinase"/>
    <property type="match status" value="1"/>
</dbReference>
<dbReference type="SMART" id="SM00220">
    <property type="entry name" value="S_TKc"/>
    <property type="match status" value="1"/>
</dbReference>
<dbReference type="SUPFAM" id="SSF54427">
    <property type="entry name" value="NTF2-like"/>
    <property type="match status" value="1"/>
</dbReference>
<dbReference type="SUPFAM" id="SSF56112">
    <property type="entry name" value="Protein kinase-like (PK-like)"/>
    <property type="match status" value="1"/>
</dbReference>
<dbReference type="PROSITE" id="PS00107">
    <property type="entry name" value="PROTEIN_KINASE_ATP"/>
    <property type="match status" value="1"/>
</dbReference>
<dbReference type="PROSITE" id="PS50011">
    <property type="entry name" value="PROTEIN_KINASE_DOM"/>
    <property type="match status" value="1"/>
</dbReference>
<dbReference type="PROSITE" id="PS00108">
    <property type="entry name" value="PROTEIN_KINASE_ST"/>
    <property type="match status" value="1"/>
</dbReference>
<feature type="chain" id="PRO_0000086094" description="Calcium/calmodulin-dependent protein kinase type II subunit alpha">
    <location>
        <begin position="1"/>
        <end position="478"/>
    </location>
</feature>
<feature type="domain" description="Protein kinase" evidence="3">
    <location>
        <begin position="13"/>
        <end position="271"/>
    </location>
</feature>
<feature type="region of interest" description="Calmodulin-binding">
    <location>
        <begin position="290"/>
        <end position="300"/>
    </location>
</feature>
<feature type="region of interest" description="Interaction with BAALC" evidence="9">
    <location>
        <begin position="310"/>
        <end position="320"/>
    </location>
</feature>
<feature type="region of interest" description="Disordered" evidence="4">
    <location>
        <begin position="314"/>
        <end position="341"/>
    </location>
</feature>
<feature type="compositionally biased region" description="Basic and acidic residues" evidence="4">
    <location>
        <begin position="322"/>
        <end position="331"/>
    </location>
</feature>
<feature type="active site" description="Proton acceptor">
    <location>
        <position position="135"/>
    </location>
</feature>
<feature type="binding site" evidence="3">
    <location>
        <begin position="19"/>
        <end position="27"/>
    </location>
    <ligand>
        <name>ATP</name>
        <dbReference type="ChEBI" id="CHEBI:30616"/>
    </ligand>
</feature>
<feature type="binding site" evidence="3">
    <location>
        <position position="42"/>
    </location>
    <ligand>
        <name>ATP</name>
        <dbReference type="ChEBI" id="CHEBI:30616"/>
    </ligand>
</feature>
<feature type="modified residue" description="Phosphotyrosine" evidence="1">
    <location>
        <position position="13"/>
    </location>
</feature>
<feature type="modified residue" description="Phosphoserine" evidence="15">
    <location>
        <position position="257"/>
    </location>
</feature>
<feature type="modified residue" description="Phosphothreonine; by autocatalysis" evidence="12">
    <location>
        <position position="286"/>
    </location>
</feature>
<feature type="modified residue" description="Phosphoserine" evidence="1">
    <location>
        <position position="330"/>
    </location>
</feature>
<feature type="modified residue" description="Phosphoserine" evidence="1">
    <location>
        <position position="331"/>
    </location>
</feature>
<feature type="modified residue" description="Phosphoserine" evidence="1">
    <location>
        <position position="333"/>
    </location>
</feature>
<feature type="modified residue" description="Phosphothreonine" evidence="1">
    <location>
        <position position="336"/>
    </location>
</feature>
<feature type="modified residue" description="Phosphothreonine" evidence="1">
    <location>
        <position position="337"/>
    </location>
</feature>
<feature type="modified residue" description="Phosphoserine" evidence="15">
    <location>
        <position position="404"/>
    </location>
</feature>
<feature type="mutagenesis site" description="Loss of interaction with MPDZ." evidence="8">
    <original>IRIT</original>
    <variation>MGTA</variation>
    <location>
        <begin position="432"/>
        <end position="435"/>
    </location>
</feature>
<feature type="sequence conflict" description="In Ref. 3; AAA41855." evidence="14" ref="3">
    <original>G</original>
    <variation>A</variation>
    <location>
        <position position="301"/>
    </location>
</feature>
<feature type="helix" evidence="16">
    <location>
        <begin position="295"/>
        <end position="309"/>
    </location>
</feature>
<feature type="helix" evidence="17">
    <location>
        <begin position="346"/>
        <end position="363"/>
    </location>
</feature>
<feature type="helix" evidence="17">
    <location>
        <begin position="366"/>
        <end position="372"/>
    </location>
</feature>
<feature type="strand" evidence="17">
    <location>
        <begin position="373"/>
        <end position="380"/>
    </location>
</feature>
<feature type="helix" evidence="17">
    <location>
        <begin position="382"/>
        <end position="384"/>
    </location>
</feature>
<feature type="strand" evidence="17">
    <location>
        <begin position="389"/>
        <end position="392"/>
    </location>
</feature>
<feature type="helix" evidence="17">
    <location>
        <begin position="393"/>
        <end position="401"/>
    </location>
</feature>
<feature type="turn" evidence="17">
    <location>
        <begin position="402"/>
        <end position="405"/>
    </location>
</feature>
<feature type="strand" evidence="17">
    <location>
        <begin position="410"/>
        <end position="421"/>
    </location>
</feature>
<feature type="strand" evidence="17">
    <location>
        <begin position="423"/>
        <end position="438"/>
    </location>
</feature>
<feature type="strand" evidence="17">
    <location>
        <begin position="444"/>
        <end position="458"/>
    </location>
</feature>
<feature type="strand" evidence="17">
    <location>
        <begin position="461"/>
        <end position="472"/>
    </location>
</feature>
<sequence length="478" mass="54115">MATITCTRFTEEYQLFEELGKGAFSVVRRCVKVLAGQEYAAKIINTKKLSARDHQKLEREARICRLLKHPNIVRLHDSISEEGHHYLIFDLVTGGELFEDIVAREYYSEADASHCIQQILEAVLHCHQMGVVHRDLKPENLLLASKLKGAAVKLADFGLAIEVEGEQQAWFGFAGTPGYLSPEVLRKDPYGKPVDLWACGVILYILLVGYPPFWDEDQHRLYQQIKAGAYDFPSPEWDTVTPEAKDLINKMLTINPSKRITAAEALKHPWISHRSTVASCMHRQETVDCLKKFNARRKLKGAILTTMLATRNFSGGKSGGNKKNDGVKESSESTNTTIEDEDTKVRKQEIIKVTEQLIEAISNGDFESYTKMCDPGMTAFEPEALGNLVEGLDFHRFYFENLWSRNSKPVHTTILNPHIHLMGDESACIAYIRITQYLDAGGIPRTAQSEETRVWHRRDGKWQIVHFHRSGAPSVLPH</sequence>
<comment type="function">
    <text evidence="1 2 6 8">Calcium/calmodulin-dependent protein kinase that functions autonomously after Ca(2+)/calmodulin-binding and autophosphorylation, and is involved in various processes, such as synaptic plasticity, neurotransmitter release and long-term potentiation. Member of the NMDAR signaling complex in excitatory synapses, it regulates NMDAR-dependent potentiation of the AMPAR and therefore excitatory synaptic transmission (PubMed:15312654). Regulates dendritic spine development. Also regulates the migration of developing neurons. Phosphorylates the transcription factor FOXO3 to activate its transcriptional activity (By similarity). Phosphorylates the transcription factor ETS1 in response to calcium signaling, thereby decreasing ETS1 affinity for DNA (By similarity). In response to interferon-gamma (IFN-gamma) stimulation, catalyzes phosphorylation of STAT1, stimulating the JAK-STAT signaling pathway (PubMed:11972023). In response to interferon-beta (IFN-beta) stimulation, stimulates the JAK-STAT signaling pathway (By similarity). Acts as a negative regulator of 2-arachidonoylglycerol (2-AG)-mediated synaptic signaling via modulation of DAGLA activity (By similarity).</text>
</comment>
<comment type="catalytic activity">
    <reaction evidence="6">
        <text>L-seryl-[protein] + ATP = O-phospho-L-seryl-[protein] + ADP + H(+)</text>
        <dbReference type="Rhea" id="RHEA:17989"/>
        <dbReference type="Rhea" id="RHEA-COMP:9863"/>
        <dbReference type="Rhea" id="RHEA-COMP:11604"/>
        <dbReference type="ChEBI" id="CHEBI:15378"/>
        <dbReference type="ChEBI" id="CHEBI:29999"/>
        <dbReference type="ChEBI" id="CHEBI:30616"/>
        <dbReference type="ChEBI" id="CHEBI:83421"/>
        <dbReference type="ChEBI" id="CHEBI:456216"/>
        <dbReference type="EC" id="2.7.11.17"/>
    </reaction>
</comment>
<comment type="catalytic activity">
    <reaction evidence="2">
        <text>L-threonyl-[protein] + ATP = O-phospho-L-threonyl-[protein] + ADP + H(+)</text>
        <dbReference type="Rhea" id="RHEA:46608"/>
        <dbReference type="Rhea" id="RHEA-COMP:11060"/>
        <dbReference type="Rhea" id="RHEA-COMP:11605"/>
        <dbReference type="ChEBI" id="CHEBI:15378"/>
        <dbReference type="ChEBI" id="CHEBI:30013"/>
        <dbReference type="ChEBI" id="CHEBI:30616"/>
        <dbReference type="ChEBI" id="CHEBI:61977"/>
        <dbReference type="ChEBI" id="CHEBI:456216"/>
        <dbReference type="EC" id="2.7.11.17"/>
    </reaction>
</comment>
<comment type="cofactor">
    <cofactor evidence="2">
        <name>Mg(2+)</name>
        <dbReference type="ChEBI" id="CHEBI:18420"/>
    </cofactor>
</comment>
<comment type="activity regulation">
    <text evidence="12">Activated by Ca(2+)/calmodulin. Binding of calmodulin results in conformational change that relieves intrasteric autoinhibition and allows autophosphorylation of Thr-286 which turns the kinase in a constitutively active form and confers to the kinase a Ca(2+)-independent activity.</text>
</comment>
<comment type="subunit">
    <text evidence="1 2 5 7 8 9 10 13">There are 4 genes encoding calcium/calmodulin-dependent protein kinase type II chains: CAMK2A, CAMK2B, CAMK2G and CAMK2D. The corresponding proteins assemble into homo- or heteromultimeric holoenzymes composed of 12 subunits with two hexameric rings stacked one on top of the other (By similarity). Interacts with BAALC (PubMed:15659234). Interacts with MPDZ (PubMed:15312654). Interacts with SYN1 (PubMed:1328883). Interacts with CAMK2N2 (PubMed:9724800). Interacts with SYNGAP1 (PubMed:15312654). Interacts with SYNPO2 (PubMed:17923693). Interacts with SHANK3. Interacts with GRIN2B. Interacts with CACNB2. Interacts with LRRC7. Interacts with GRM5 (By similarity). Interacts with DAGLA (via C-terminal); this interaction is enhanced by autophosphorylation of CAMK2A at Thr-286 (By similarity). Interacts with CAMK2N1; this interaction requires CAMK2A activation by Ca(2+) (PubMed:11182241).</text>
</comment>
<comment type="interaction">
    <interactant intactId="EBI-2640645">
        <id>P11275</id>
    </interactant>
    <interactant intactId="EBI-3507416">
        <id>P54282</id>
        <label>Cacna1a</label>
    </interactant>
    <organismsDiffer>false</organismsDiffer>
    <experiments>3</experiments>
</comment>
<comment type="interaction">
    <interactant intactId="EBI-2640645">
        <id>P11275</id>
    </interactant>
    <interactant intactId="EBI-7946407">
        <id>P08483</id>
        <label>Chrm3</label>
    </interactant>
    <organismsDiffer>false</organismsDiffer>
    <experiments>2</experiments>
</comment>
<comment type="interaction">
    <interactant intactId="EBI-2640645">
        <id>P11275</id>
    </interactant>
    <interactant intactId="EBI-7946147">
        <id>P08485</id>
        <label>Chrm4</label>
    </interactant>
    <organismsDiffer>false</organismsDiffer>
    <experiments>10</experiments>
</comment>
<comment type="interaction">
    <interactant intactId="EBI-2640645">
        <id>P11275</id>
    </interactant>
    <interactant intactId="EBI-371642">
        <id>P19490</id>
        <label>Gria1</label>
    </interactant>
    <organismsDiffer>false</organismsDiffer>
    <experiments>3</experiments>
</comment>
<comment type="interaction">
    <interactant intactId="EBI-2640645">
        <id>P11275</id>
    </interactant>
    <interactant intactId="EBI-396905">
        <id>Q00960</id>
        <label>Grin2b</label>
    </interactant>
    <organismsDiffer>false</organismsDiffer>
    <experiments>2</experiments>
</comment>
<comment type="interaction">
    <interactant intactId="EBI-2640645">
        <id>P11275</id>
    </interactant>
    <interactant intactId="EBI-7798464">
        <id>P70587</id>
        <label>Lrrc7</label>
    </interactant>
    <organismsDiffer>false</organismsDiffer>
    <experiments>2</experiments>
</comment>
<comment type="interaction">
    <interactant intactId="EBI-2640645">
        <id>P11275</id>
    </interactant>
    <interactant intactId="EBI-357745">
        <id>P62195</id>
        <label>PSMC5</label>
    </interactant>
    <organismsDiffer>true</organismsDiffer>
    <experiments>4</experiments>
</comment>
<comment type="subcellular location">
    <subcellularLocation>
        <location evidence="9">Synapse</location>
    </subcellularLocation>
    <subcellularLocation>
        <location evidence="9">Postsynaptic density</location>
    </subcellularLocation>
    <subcellularLocation>
        <location evidence="2">Cell projection</location>
        <location evidence="2">Dendritic spine</location>
    </subcellularLocation>
    <subcellularLocation>
        <location evidence="2">Cell projection</location>
        <location evidence="2">Dendrite</location>
    </subcellularLocation>
    <text evidence="9">Postsynaptic lipid rafts.</text>
</comment>
<comment type="PTM">
    <text evidence="2">Autophosphorylation of Thr-286 following activation by Ca(2+)/calmodulin. Phosphorylation of Thr-286 locks the kinase into an activated state.</text>
</comment>
<comment type="PTM">
    <text evidence="11">Palmitoylated (PubMed:23687301). Probably palmitoylated by ZDHHC3 and ZDHHC7 (PubMed:23687301).</text>
</comment>
<comment type="similarity">
    <text evidence="14">Belongs to the protein kinase superfamily. CAMK Ser/Thr protein kinase family. CaMK subfamily.</text>
</comment>
<reference key="1">
    <citation type="journal article" date="1987" name="Proc. Natl. Acad. Sci. U.S.A.">
        <title>Molecular cloning of a brain-specific calcium/calmodulin-dependent protein kinase.</title>
        <authorList>
            <person name="Lin C.R."/>
            <person name="Kapiloff M.S."/>
            <person name="Durgerian S."/>
            <person name="Tatemoto K."/>
            <person name="Russo A.F."/>
            <person name="Hanson P."/>
            <person name="Schulman H."/>
            <person name="Rosenfeld M.G."/>
        </authorList>
    </citation>
    <scope>NUCLEOTIDE SEQUENCE [MRNA]</scope>
</reference>
<reference key="2">
    <citation type="journal article" date="1988" name="Neuron">
        <title>Conserved and variable regions in the subunits of brain type II Ca2+/calmodulin-dependent protein kinase.</title>
        <authorList>
            <person name="Bulleit R.F."/>
            <person name="Bennett M.K."/>
            <person name="Molloy S.S."/>
            <person name="Hurley J.B."/>
            <person name="Kennedy M.B."/>
        </authorList>
    </citation>
    <scope>NUCLEOTIDE SEQUENCE [MRNA]</scope>
</reference>
<reference key="3">
    <citation type="journal article" date="1987" name="Science">
        <title>Functional analysis of a complementary DNA for the 50-kilodalton subunit of calmodulin kinase II.</title>
        <authorList>
            <person name="Hanley R.M."/>
            <person name="Means A.R."/>
            <person name="Ono T."/>
            <person name="Kemp B.E."/>
            <person name="Burgin K.E."/>
            <person name="Waxham N."/>
            <person name="Kelly P.T."/>
        </authorList>
    </citation>
    <scope>NUCLEOTIDE SEQUENCE [MRNA] OF 132-327</scope>
</reference>
<reference key="4">
    <citation type="journal article" date="1990" name="Proc. Natl. Acad. Sci. U.S.A.">
        <title>Sequence analysis and DNA-protein interactions within the 5' flanking region of the Ca2+/calmodulin-dependent protein kinase II alpha-subunit gene.</title>
        <authorList>
            <person name="Sunyer T."/>
            <person name="Sahyoun N."/>
        </authorList>
    </citation>
    <scope>NUCLEOTIDE SEQUENCE [GENOMIC DNA] OF 1-6</scope>
</reference>
<reference key="5">
    <citation type="journal article" date="1992" name="Nature">
        <title>Synaptic vesicle-associated Ca2+/calmodulin-dependent protein kinase II is a binding protein for synapsin I.</title>
        <authorList>
            <person name="Benfenati F."/>
            <person name="Valtorta F."/>
            <person name="Rubenstein J.L."/>
            <person name="Gorelick F.S."/>
            <person name="Greengard P."/>
            <person name="Czernik A.J."/>
        </authorList>
    </citation>
    <scope>PROTEIN SEQUENCE OF 231-236; 238-246 AND 461-476</scope>
    <scope>INTERACTION WITH SYN1</scope>
</reference>
<reference key="6">
    <citation type="journal article" date="1988" name="Proc. Natl. Acad. Sci. U.S.A.">
        <title>Ca2+/calmodulin-dependent protein kinase II: identification of threonine-286 as the autophosphorylation site in the alpha subunit associated with the generation of Ca2+-independent activity.</title>
        <authorList>
            <person name="Thiel G."/>
            <person name="Czernik A.J."/>
            <person name="Gorelick F."/>
            <person name="Nairn A.C."/>
            <person name="Greengard P."/>
        </authorList>
    </citation>
    <scope>PROTEIN SEQUENCE OF 282-299</scope>
    <scope>ACTIVITY REGULATION</scope>
    <scope>PHOSPHORYLATION AT THR-286</scope>
</reference>
<reference key="7">
    <citation type="journal article" date="1998" name="Proc. Natl. Acad. Sci. U.S.A.">
        <title>Characterization of a calmodulin kinase II inhibitor protein in brain.</title>
        <authorList>
            <person name="Chang B.H."/>
            <person name="Mukherji S."/>
            <person name="Soderling T.R."/>
        </authorList>
    </citation>
    <scope>INTERACTION WITH CAMK2N2</scope>
</reference>
<reference key="8">
    <citation type="journal article" date="2001" name="Neuroscience">
        <title>Calcium/calmodulin-dependent protein kinase II inhibitor protein: localization of isoforms in rat brain.</title>
        <authorList>
            <person name="Chang B.H."/>
            <person name="Mukherji S."/>
            <person name="Soderling T.R."/>
        </authorList>
    </citation>
    <scope>INTERACTION WITH CAMK2N1</scope>
</reference>
<reference key="9">
    <citation type="journal article" date="2002" name="Proc. Natl. Acad. Sci. U.S.A.">
        <title>Requirement of Ca2+ and CaMKII for Stat1 Ser-727 phosphorylation in response to IFN-gamma.</title>
        <authorList>
            <person name="Nair J.S."/>
            <person name="DaFonseca C.J."/>
            <person name="Tjernberg A."/>
            <person name="Sun W."/>
            <person name="Darnell J.E. Jr."/>
            <person name="Chait B.T."/>
            <person name="Zhang J.J."/>
        </authorList>
    </citation>
    <scope>FUNCTION</scope>
    <scope>CATALYTIC ACTIVITY</scope>
</reference>
<reference key="10">
    <citation type="journal article" date="2004" name="Neuron">
        <title>SynGAP-MUPP1-CaMKII synaptic complexes regulate p38 MAP kinase activity and NMDA receptor-dependent synaptic AMPA receptor potentiation.</title>
        <authorList>
            <person name="Krapivinsky G."/>
            <person name="Medina I."/>
            <person name="Krapivinsky L."/>
            <person name="Gapon S."/>
            <person name="Clapham D.E."/>
        </authorList>
    </citation>
    <scope>INTERACTION WITH SYNGAP1 AND MPDZ</scope>
    <scope>MUTAGENESIS OF 432-ILE--THR-435</scope>
    <scope>FUNCTION</scope>
</reference>
<reference key="11">
    <citation type="journal article" date="2005" name="J. Neurochem.">
        <title>BAALC 1-6-8 protein is targeted to postsynaptic lipid rafts by its N-terminal myristoylation and palmitoylation, and interacts with a, but not b, subunit of Ca2+/calmodulin-dependent protein kinase II.</title>
        <authorList>
            <person name="Wang X."/>
            <person name="Tian Q.-B."/>
            <person name="Okano A."/>
            <person name="Sakagami H."/>
            <person name="Moon I.S."/>
            <person name="Kondo H."/>
            <person name="Endo S."/>
            <person name="Suzuki T."/>
        </authorList>
    </citation>
    <scope>INTERACTION WITH BAALC</scope>
    <scope>SUBCELLULAR LOCATION</scope>
</reference>
<reference key="12">
    <citation type="journal article" date="2007" name="Mol. Cell. Biol.">
        <title>Protein kinase A, Ca2+/calmodulin-dependent kinase II, and calcineurin regulate the intracellular trafficking of myopodin between the Z-disc and the nucleus of cardiac myocytes.</title>
        <authorList>
            <person name="Faul C."/>
            <person name="Dhume A."/>
            <person name="Schecter A.D."/>
            <person name="Mundel P."/>
        </authorList>
    </citation>
    <scope>INTERACTION WITH SYNPO2</scope>
</reference>
<reference key="13">
    <citation type="journal article" date="2012" name="Nat. Commun.">
        <title>Quantitative maps of protein phosphorylation sites across 14 different rat organs and tissues.</title>
        <authorList>
            <person name="Lundby A."/>
            <person name="Secher A."/>
            <person name="Lage K."/>
            <person name="Nordsborg N.B."/>
            <person name="Dmytriyev A."/>
            <person name="Lundby C."/>
            <person name="Olsen J.V."/>
        </authorList>
    </citation>
    <scope>PHOSPHORYLATION [LARGE SCALE ANALYSIS] AT SER-257 AND SER-404</scope>
    <scope>IDENTIFICATION BY MASS SPECTROMETRY [LARGE SCALE ANALYSIS]</scope>
</reference>
<reference key="14">
    <citation type="journal article" date="2013" name="J. Biol. Chem.">
        <title>In silico screening for palmitoyl substrates reveals a role for DHHC1/3/10 (zDHHC1/3/11)-mediated neurochondrin palmitoylation in its targeting to Rab5-positive endosomes.</title>
        <authorList>
            <person name="Oku S."/>
            <person name="Takahashi N."/>
            <person name="Fukata Y."/>
            <person name="Fukata M."/>
        </authorList>
    </citation>
    <scope>PALMITOYLATION</scope>
</reference>
<evidence type="ECO:0000250" key="1">
    <source>
        <dbReference type="UniProtKB" id="P11798"/>
    </source>
</evidence>
<evidence type="ECO:0000250" key="2">
    <source>
        <dbReference type="UniProtKB" id="Q9UQM7"/>
    </source>
</evidence>
<evidence type="ECO:0000255" key="3">
    <source>
        <dbReference type="PROSITE-ProRule" id="PRU00159"/>
    </source>
</evidence>
<evidence type="ECO:0000256" key="4">
    <source>
        <dbReference type="SAM" id="MobiDB-lite"/>
    </source>
</evidence>
<evidence type="ECO:0000269" key="5">
    <source>
    </source>
</evidence>
<evidence type="ECO:0000269" key="6">
    <source>
    </source>
</evidence>
<evidence type="ECO:0000269" key="7">
    <source>
    </source>
</evidence>
<evidence type="ECO:0000269" key="8">
    <source>
    </source>
</evidence>
<evidence type="ECO:0000269" key="9">
    <source>
    </source>
</evidence>
<evidence type="ECO:0000269" key="10">
    <source>
    </source>
</evidence>
<evidence type="ECO:0000269" key="11">
    <source>
    </source>
</evidence>
<evidence type="ECO:0000269" key="12">
    <source>
    </source>
</evidence>
<evidence type="ECO:0000269" key="13">
    <source>
    </source>
</evidence>
<evidence type="ECO:0000305" key="14"/>
<evidence type="ECO:0007744" key="15">
    <source>
    </source>
</evidence>
<evidence type="ECO:0007829" key="16">
    <source>
        <dbReference type="PDB" id="1CDM"/>
    </source>
</evidence>
<evidence type="ECO:0007829" key="17">
    <source>
        <dbReference type="PDB" id="8SYG"/>
    </source>
</evidence>